<gene>
    <name type="primary">M</name>
    <name type="ORF">6</name>
</gene>
<accession>Q04565</accession>
<name>M_PRRSL</name>
<comment type="function">
    <text>Major envelope protein.</text>
</comment>
<comment type="subunit">
    <text evidence="1">Heterodimer with the membrane protein; disulfide-linked. This heterodimerization is required for transport to the Golgi complex (By similarity).</text>
</comment>
<comment type="subcellular location">
    <subcellularLocation>
        <location evidence="3">Virion membrane</location>
        <topology evidence="3">Multi-pass membrane protein</topology>
    </subcellularLocation>
    <subcellularLocation>
        <location evidence="3">Host membrane</location>
        <topology evidence="3">Multi-pass membrane protein</topology>
    </subcellularLocation>
</comment>
<comment type="similarity">
    <text evidence="3">Belongs to the arteriviridae membrane protein family.</text>
</comment>
<organismHost>
    <name type="scientific">Sus scrofa</name>
    <name type="common">Pig</name>
    <dbReference type="NCBI Taxonomy" id="9823"/>
</organismHost>
<dbReference type="EMBL" id="M96262">
    <property type="protein sequence ID" value="AAA46279.1"/>
    <property type="molecule type" value="Genomic_RNA"/>
</dbReference>
<dbReference type="EMBL" id="L04493">
    <property type="protein sequence ID" value="AAA47106.1"/>
    <property type="molecule type" value="Genomic_RNA"/>
</dbReference>
<dbReference type="PIR" id="A44281">
    <property type="entry name" value="A44281"/>
</dbReference>
<dbReference type="PIR" id="F45392">
    <property type="entry name" value="F45392"/>
</dbReference>
<dbReference type="Proteomes" id="UP000006687">
    <property type="component" value="Segment"/>
</dbReference>
<dbReference type="GO" id="GO:0033644">
    <property type="term" value="C:host cell membrane"/>
    <property type="evidence" value="ECO:0007669"/>
    <property type="project" value="UniProtKB-SubCell"/>
</dbReference>
<dbReference type="GO" id="GO:0016020">
    <property type="term" value="C:membrane"/>
    <property type="evidence" value="ECO:0007669"/>
    <property type="project" value="UniProtKB-KW"/>
</dbReference>
<dbReference type="GO" id="GO:0019031">
    <property type="term" value="C:viral envelope"/>
    <property type="evidence" value="ECO:0007669"/>
    <property type="project" value="UniProtKB-KW"/>
</dbReference>
<dbReference type="GO" id="GO:0055036">
    <property type="term" value="C:virion membrane"/>
    <property type="evidence" value="ECO:0007669"/>
    <property type="project" value="UniProtKB-SubCell"/>
</dbReference>
<dbReference type="InterPro" id="IPR001332">
    <property type="entry name" value="Arteri_GP5"/>
</dbReference>
<dbReference type="Pfam" id="PF00951">
    <property type="entry name" value="Arteri_Gl"/>
    <property type="match status" value="1"/>
</dbReference>
<reference key="1">
    <citation type="journal article" date="1993" name="Virology">
        <title>Lelystad virus, the causative agent of porcine epidemic abortion and respiratory syndrome (PEARS), is related to LDV and EAV.</title>
        <authorList>
            <person name="Meulenberg J.J.M."/>
            <person name="Hulst M.M."/>
            <person name="de Meijer E.J."/>
            <person name="Moonen P.L.J.M."/>
            <person name="den Besten A."/>
            <person name="de Kluyver E.P."/>
            <person name="Wensvoort G."/>
            <person name="Moormann R.J.M."/>
        </authorList>
    </citation>
    <scope>NUCLEOTIDE SEQUENCE [GENOMIC RNA]</scope>
</reference>
<reference key="2">
    <citation type="journal article" date="1993" name="Virology">
        <title>Molecular characterization of porcine reproductive and respiratory syndrome virus, a member of the arterivirus group.</title>
        <authorList>
            <person name="Conzelmann K.K."/>
            <person name="Visser N."/>
            <person name="van Woensel P."/>
            <person name="Thiel H.J."/>
        </authorList>
    </citation>
    <scope>NUCLEOTIDE SEQUENCE [GENOMIC RNA]</scope>
    <source>
        <strain>Isolate Boxmeer 10</strain>
    </source>
</reference>
<keyword id="KW-1015">Disulfide bond</keyword>
<keyword id="KW-1043">Host membrane</keyword>
<keyword id="KW-0472">Membrane</keyword>
<keyword id="KW-1185">Reference proteome</keyword>
<keyword id="KW-0812">Transmembrane</keyword>
<keyword id="KW-1133">Transmembrane helix</keyword>
<keyword id="KW-0261">Viral envelope protein</keyword>
<keyword id="KW-0946">Virion</keyword>
<sequence>MGGLDDFCNDPIAAQKLVLAFSITYTPIMIYALKVSRGRLLGLLHILIFLNCSFTFGYMTYVHFQSTNRVALTLGAVVALLWGVYSFTESWKFITSRCRLCCLGRRYILAPAHHVESAAGLHSISASGNRAYAVRKPGLTSVNGTLVPGLRSLVLGGKRAVKRGVVNLVKYGR</sequence>
<feature type="chain" id="PRO_0000080875" description="Membrane protein">
    <location>
        <begin position="1"/>
        <end position="173"/>
    </location>
</feature>
<feature type="topological domain" description="Virion surface" evidence="2">
    <location>
        <begin position="1"/>
        <end position="11"/>
    </location>
</feature>
<feature type="transmembrane region" description="Helical" evidence="2">
    <location>
        <begin position="12"/>
        <end position="32"/>
    </location>
</feature>
<feature type="topological domain" description="Intravirion" evidence="2">
    <location>
        <begin position="33"/>
        <end position="39"/>
    </location>
</feature>
<feature type="transmembrane region" description="Helical" evidence="2">
    <location>
        <begin position="40"/>
        <end position="60"/>
    </location>
</feature>
<feature type="topological domain" description="Virion surface" evidence="2">
    <location>
        <begin position="61"/>
        <end position="69"/>
    </location>
</feature>
<feature type="transmembrane region" description="Helical" evidence="2">
    <location>
        <begin position="70"/>
        <end position="90"/>
    </location>
</feature>
<feature type="topological domain" description="Intravirion" evidence="2">
    <location>
        <begin position="91"/>
        <end position="173"/>
    </location>
</feature>
<feature type="disulfide bond" description="Interchain (with C-24 in GP5)" evidence="1">
    <location>
        <position position="8"/>
    </location>
</feature>
<protein>
    <recommendedName>
        <fullName>Membrane protein</fullName>
        <shortName>Protein M</shortName>
    </recommendedName>
</protein>
<proteinExistence type="inferred from homology"/>
<organism>
    <name type="scientific">Porcine reproductive and respiratory syndrome virus (strain Lelystad)</name>
    <name type="common">PRRSV</name>
    <dbReference type="NCBI Taxonomy" id="11049"/>
    <lineage>
        <taxon>Viruses</taxon>
        <taxon>Riboviria</taxon>
        <taxon>Orthornavirae</taxon>
        <taxon>Pisuviricota</taxon>
        <taxon>Pisoniviricetes</taxon>
        <taxon>Nidovirales</taxon>
        <taxon>Arnidovirineae</taxon>
        <taxon>Arteriviridae</taxon>
        <taxon>Variarterivirinae</taxon>
        <taxon>Betaarterivirus</taxon>
        <taxon>Eurpobartevirus</taxon>
        <taxon>Betaarterivirus suid 1</taxon>
    </lineage>
</organism>
<evidence type="ECO:0000250" key="1"/>
<evidence type="ECO:0000255" key="2"/>
<evidence type="ECO:0000305" key="3"/>